<protein>
    <recommendedName>
        <fullName evidence="1">Adenine deaminase</fullName>
        <shortName evidence="1">ADE</shortName>
        <ecNumber evidence="1">3.5.4.2</ecNumber>
    </recommendedName>
    <alternativeName>
        <fullName evidence="1">Adenine aminohydrolase</fullName>
        <shortName evidence="1">AAH</shortName>
    </alternativeName>
</protein>
<evidence type="ECO:0000255" key="1">
    <source>
        <dbReference type="HAMAP-Rule" id="MF_03145"/>
    </source>
</evidence>
<keyword id="KW-0963">Cytoplasm</keyword>
<keyword id="KW-0378">Hydrolase</keyword>
<keyword id="KW-0479">Metal-binding</keyword>
<keyword id="KW-0546">Nucleotide metabolism</keyword>
<keyword id="KW-0539">Nucleus</keyword>
<keyword id="KW-1185">Reference proteome</keyword>
<keyword id="KW-0862">Zinc</keyword>
<dbReference type="EC" id="3.5.4.2" evidence="1"/>
<dbReference type="EMBL" id="DS231663">
    <property type="protein sequence ID" value="ESU06894.1"/>
    <property type="molecule type" value="Genomic_DNA"/>
</dbReference>
<dbReference type="EMBL" id="HG970332">
    <property type="protein sequence ID" value="CEF73714.1"/>
    <property type="molecule type" value="Genomic_DNA"/>
</dbReference>
<dbReference type="RefSeq" id="XP_011317379.1">
    <property type="nucleotide sequence ID" value="XM_011319077.1"/>
</dbReference>
<dbReference type="SMR" id="Q4IMJ1"/>
<dbReference type="FunCoup" id="Q4IMJ1">
    <property type="interactions" value="612"/>
</dbReference>
<dbReference type="STRING" id="229533.Q4IMJ1"/>
<dbReference type="GeneID" id="23549001"/>
<dbReference type="KEGG" id="fgr:FGSG_01567"/>
<dbReference type="VEuPathDB" id="FungiDB:FGRAMPH1_01G03819"/>
<dbReference type="eggNOG" id="KOG1097">
    <property type="taxonomic scope" value="Eukaryota"/>
</dbReference>
<dbReference type="HOGENOM" id="CLU_039228_7_0_1"/>
<dbReference type="InParanoid" id="Q4IMJ1"/>
<dbReference type="OrthoDB" id="17834at110618"/>
<dbReference type="Proteomes" id="UP000070720">
    <property type="component" value="Chromosome 1"/>
</dbReference>
<dbReference type="GO" id="GO:0005829">
    <property type="term" value="C:cytosol"/>
    <property type="evidence" value="ECO:0007669"/>
    <property type="project" value="TreeGrafter"/>
</dbReference>
<dbReference type="GO" id="GO:0005634">
    <property type="term" value="C:nucleus"/>
    <property type="evidence" value="ECO:0007669"/>
    <property type="project" value="UniProtKB-SubCell"/>
</dbReference>
<dbReference type="GO" id="GO:0000034">
    <property type="term" value="F:adenine deaminase activity"/>
    <property type="evidence" value="ECO:0007669"/>
    <property type="project" value="UniProtKB-UniRule"/>
</dbReference>
<dbReference type="GO" id="GO:0008270">
    <property type="term" value="F:zinc ion binding"/>
    <property type="evidence" value="ECO:0007669"/>
    <property type="project" value="UniProtKB-UniRule"/>
</dbReference>
<dbReference type="GO" id="GO:0006146">
    <property type="term" value="P:adenine catabolic process"/>
    <property type="evidence" value="ECO:0007669"/>
    <property type="project" value="UniProtKB-UniRule"/>
</dbReference>
<dbReference type="GO" id="GO:0043103">
    <property type="term" value="P:hypoxanthine salvage"/>
    <property type="evidence" value="ECO:0007669"/>
    <property type="project" value="UniProtKB-UniRule"/>
</dbReference>
<dbReference type="GO" id="GO:0009117">
    <property type="term" value="P:nucleotide metabolic process"/>
    <property type="evidence" value="ECO:0007669"/>
    <property type="project" value="UniProtKB-KW"/>
</dbReference>
<dbReference type="GO" id="GO:0009168">
    <property type="term" value="P:purine ribonucleoside monophosphate biosynthetic process"/>
    <property type="evidence" value="ECO:0007669"/>
    <property type="project" value="InterPro"/>
</dbReference>
<dbReference type="CDD" id="cd01320">
    <property type="entry name" value="ADA"/>
    <property type="match status" value="1"/>
</dbReference>
<dbReference type="FunFam" id="3.20.20.140:FF:000039">
    <property type="entry name" value="Adenine deaminase"/>
    <property type="match status" value="1"/>
</dbReference>
<dbReference type="Gene3D" id="3.20.20.140">
    <property type="entry name" value="Metal-dependent hydrolases"/>
    <property type="match status" value="1"/>
</dbReference>
<dbReference type="HAMAP" id="MF_01962">
    <property type="entry name" value="Adenine_deaminase"/>
    <property type="match status" value="1"/>
</dbReference>
<dbReference type="InterPro" id="IPR006650">
    <property type="entry name" value="A/AMP_deam_AS"/>
</dbReference>
<dbReference type="InterPro" id="IPR001365">
    <property type="entry name" value="A_deaminase_dom"/>
</dbReference>
<dbReference type="InterPro" id="IPR028892">
    <property type="entry name" value="ADE"/>
</dbReference>
<dbReference type="InterPro" id="IPR006330">
    <property type="entry name" value="Ado/ade_deaminase"/>
</dbReference>
<dbReference type="InterPro" id="IPR032466">
    <property type="entry name" value="Metal_Hydrolase"/>
</dbReference>
<dbReference type="NCBIfam" id="TIGR01430">
    <property type="entry name" value="aden_deam"/>
    <property type="match status" value="1"/>
</dbReference>
<dbReference type="PANTHER" id="PTHR43114">
    <property type="entry name" value="ADENINE DEAMINASE"/>
    <property type="match status" value="1"/>
</dbReference>
<dbReference type="PANTHER" id="PTHR43114:SF6">
    <property type="entry name" value="ADENINE DEAMINASE"/>
    <property type="match status" value="1"/>
</dbReference>
<dbReference type="Pfam" id="PF00962">
    <property type="entry name" value="A_deaminase"/>
    <property type="match status" value="1"/>
</dbReference>
<dbReference type="SUPFAM" id="SSF51556">
    <property type="entry name" value="Metallo-dependent hydrolases"/>
    <property type="match status" value="1"/>
</dbReference>
<dbReference type="PROSITE" id="PS00485">
    <property type="entry name" value="A_DEAMINASE"/>
    <property type="match status" value="1"/>
</dbReference>
<comment type="function">
    <text evidence="1">Catalyzes the hydrolytic deamination of adenine to hypoxanthine. Plays an important role in the purine salvage pathway and in nitrogen catabolism.</text>
</comment>
<comment type="catalytic activity">
    <reaction evidence="1">
        <text>adenine + H2O + H(+) = hypoxanthine + NH4(+)</text>
        <dbReference type="Rhea" id="RHEA:23688"/>
        <dbReference type="ChEBI" id="CHEBI:15377"/>
        <dbReference type="ChEBI" id="CHEBI:15378"/>
        <dbReference type="ChEBI" id="CHEBI:16708"/>
        <dbReference type="ChEBI" id="CHEBI:17368"/>
        <dbReference type="ChEBI" id="CHEBI:28938"/>
        <dbReference type="EC" id="3.5.4.2"/>
    </reaction>
</comment>
<comment type="cofactor">
    <cofactor evidence="1">
        <name>Zn(2+)</name>
        <dbReference type="ChEBI" id="CHEBI:29105"/>
    </cofactor>
    <text evidence="1">Binds 1 zinc ion per subunit.</text>
</comment>
<comment type="subcellular location">
    <subcellularLocation>
        <location evidence="1">Cytoplasm</location>
    </subcellularLocation>
    <subcellularLocation>
        <location evidence="1">Nucleus</location>
    </subcellularLocation>
</comment>
<comment type="similarity">
    <text evidence="1">Belongs to the metallo-dependent hydrolases superfamily. Adenosine and AMP deaminases family. Adenine deaminase type 2 subfamily.</text>
</comment>
<reference key="1">
    <citation type="journal article" date="2007" name="Science">
        <title>The Fusarium graminearum genome reveals a link between localized polymorphism and pathogen specialization.</title>
        <authorList>
            <person name="Cuomo C.A."/>
            <person name="Gueldener U."/>
            <person name="Xu J.-R."/>
            <person name="Trail F."/>
            <person name="Turgeon B.G."/>
            <person name="Di Pietro A."/>
            <person name="Walton J.D."/>
            <person name="Ma L.-J."/>
            <person name="Baker S.E."/>
            <person name="Rep M."/>
            <person name="Adam G."/>
            <person name="Antoniw J."/>
            <person name="Baldwin T."/>
            <person name="Calvo S.E."/>
            <person name="Chang Y.-L."/>
            <person name="DeCaprio D."/>
            <person name="Gale L.R."/>
            <person name="Gnerre S."/>
            <person name="Goswami R.S."/>
            <person name="Hammond-Kosack K."/>
            <person name="Harris L.J."/>
            <person name="Hilburn K."/>
            <person name="Kennell J.C."/>
            <person name="Kroken S."/>
            <person name="Magnuson J.K."/>
            <person name="Mannhaupt G."/>
            <person name="Mauceli E.W."/>
            <person name="Mewes H.-W."/>
            <person name="Mitterbauer R."/>
            <person name="Muehlbauer G."/>
            <person name="Muensterkoetter M."/>
            <person name="Nelson D."/>
            <person name="O'Donnell K."/>
            <person name="Ouellet T."/>
            <person name="Qi W."/>
            <person name="Quesneville H."/>
            <person name="Roncero M.I.G."/>
            <person name="Seong K.-Y."/>
            <person name="Tetko I.V."/>
            <person name="Urban M."/>
            <person name="Waalwijk C."/>
            <person name="Ward T.J."/>
            <person name="Yao J."/>
            <person name="Birren B.W."/>
            <person name="Kistler H.C."/>
        </authorList>
    </citation>
    <scope>NUCLEOTIDE SEQUENCE [LARGE SCALE GENOMIC DNA]</scope>
    <source>
        <strain>ATCC MYA-4620 / CBS 123657 / FGSC 9075 / NRRL 31084 / PH-1</strain>
    </source>
</reference>
<reference key="2">
    <citation type="journal article" date="2010" name="Nature">
        <title>Comparative genomics reveals mobile pathogenicity chromosomes in Fusarium.</title>
        <authorList>
            <person name="Ma L.-J."/>
            <person name="van der Does H.C."/>
            <person name="Borkovich K.A."/>
            <person name="Coleman J.J."/>
            <person name="Daboussi M.-J."/>
            <person name="Di Pietro A."/>
            <person name="Dufresne M."/>
            <person name="Freitag M."/>
            <person name="Grabherr M."/>
            <person name="Henrissat B."/>
            <person name="Houterman P.M."/>
            <person name="Kang S."/>
            <person name="Shim W.-B."/>
            <person name="Woloshuk C."/>
            <person name="Xie X."/>
            <person name="Xu J.-R."/>
            <person name="Antoniw J."/>
            <person name="Baker S.E."/>
            <person name="Bluhm B.H."/>
            <person name="Breakspear A."/>
            <person name="Brown D.W."/>
            <person name="Butchko R.A.E."/>
            <person name="Chapman S."/>
            <person name="Coulson R."/>
            <person name="Coutinho P.M."/>
            <person name="Danchin E.G.J."/>
            <person name="Diener A."/>
            <person name="Gale L.R."/>
            <person name="Gardiner D.M."/>
            <person name="Goff S."/>
            <person name="Hammond-Kosack K.E."/>
            <person name="Hilburn K."/>
            <person name="Hua-Van A."/>
            <person name="Jonkers W."/>
            <person name="Kazan K."/>
            <person name="Kodira C.D."/>
            <person name="Koehrsen M."/>
            <person name="Kumar L."/>
            <person name="Lee Y.-H."/>
            <person name="Li L."/>
            <person name="Manners J.M."/>
            <person name="Miranda-Saavedra D."/>
            <person name="Mukherjee M."/>
            <person name="Park G."/>
            <person name="Park J."/>
            <person name="Park S.-Y."/>
            <person name="Proctor R.H."/>
            <person name="Regev A."/>
            <person name="Ruiz-Roldan M.C."/>
            <person name="Sain D."/>
            <person name="Sakthikumar S."/>
            <person name="Sykes S."/>
            <person name="Schwartz D.C."/>
            <person name="Turgeon B.G."/>
            <person name="Wapinski I."/>
            <person name="Yoder O."/>
            <person name="Young S."/>
            <person name="Zeng Q."/>
            <person name="Zhou S."/>
            <person name="Galagan J."/>
            <person name="Cuomo C.A."/>
            <person name="Kistler H.C."/>
            <person name="Rep M."/>
        </authorList>
    </citation>
    <scope>GENOME REANNOTATION</scope>
    <source>
        <strain>ATCC MYA-4620 / CBS 123657 / FGSC 9075 / NRRL 31084 / PH-1</strain>
    </source>
</reference>
<reference key="3">
    <citation type="journal article" date="2015" name="BMC Genomics">
        <title>The completed genome sequence of the pathogenic ascomycete fungus Fusarium graminearum.</title>
        <authorList>
            <person name="King R."/>
            <person name="Urban M."/>
            <person name="Hammond-Kosack M.C.U."/>
            <person name="Hassani-Pak K."/>
            <person name="Hammond-Kosack K.E."/>
        </authorList>
    </citation>
    <scope>NUCLEOTIDE SEQUENCE [LARGE SCALE GENOMIC DNA]</scope>
    <source>
        <strain>ATCC MYA-4620 / CBS 123657 / FGSC 9075 / NRRL 31084 / PH-1</strain>
    </source>
</reference>
<accession>Q4IMJ1</accession>
<accession>A0A0E0RR39</accession>
<accession>V6QY46</accession>
<name>ADE_GIBZE</name>
<sequence>MCKSRVHSFLQALPKVEQHLHIEGTLEPELLFTLAEKNGIELPNDPVYESADKLRERYGRFTSLDDFLHYYYLGMSVLITENDFETLAYQYFQRAAGENVRHAEIFFDPQAHIARGVSYDTVVAGLVAAKHRAQKELGITVELIVCILRHLPVPESHALVDTLLDRGHFNDGTLTGFGMVSSEKAFPPELFTDVYARVAKTGTHLTTHAGEEAPPSFITASLEHLKVSRIDHGLAAAQDPELLKKLAANRTLLTFCPWSNVALCNLPELADAPVREFLDAGVLFSVNSDDPAYFGAYVQEVYCRVQDTFNLSVKDWAWIVRGAVEESWCSEERKKEILKEMEQVLEKYKDLDA</sequence>
<organism>
    <name type="scientific">Gibberella zeae (strain ATCC MYA-4620 / CBS 123657 / FGSC 9075 / NRRL 31084 / PH-1)</name>
    <name type="common">Wheat head blight fungus</name>
    <name type="synonym">Fusarium graminearum</name>
    <dbReference type="NCBI Taxonomy" id="229533"/>
    <lineage>
        <taxon>Eukaryota</taxon>
        <taxon>Fungi</taxon>
        <taxon>Dikarya</taxon>
        <taxon>Ascomycota</taxon>
        <taxon>Pezizomycotina</taxon>
        <taxon>Sordariomycetes</taxon>
        <taxon>Hypocreomycetidae</taxon>
        <taxon>Hypocreales</taxon>
        <taxon>Nectriaceae</taxon>
        <taxon>Fusarium</taxon>
    </lineage>
</organism>
<feature type="chain" id="PRO_0000256235" description="Adenine deaminase">
    <location>
        <begin position="1"/>
        <end position="353"/>
    </location>
</feature>
<feature type="active site" description="Proton donor" evidence="1">
    <location>
        <position position="211"/>
    </location>
</feature>
<feature type="binding site" evidence="1">
    <location>
        <position position="19"/>
    </location>
    <ligand>
        <name>Zn(2+)</name>
        <dbReference type="ChEBI" id="CHEBI:29105"/>
        <note>catalytic</note>
    </ligand>
</feature>
<feature type="binding site" evidence="1">
    <location>
        <position position="21"/>
    </location>
    <ligand>
        <name>Zn(2+)</name>
        <dbReference type="ChEBI" id="CHEBI:29105"/>
        <note>catalytic</note>
    </ligand>
</feature>
<feature type="binding site" evidence="1">
    <location>
        <position position="208"/>
    </location>
    <ligand>
        <name>Zn(2+)</name>
        <dbReference type="ChEBI" id="CHEBI:29105"/>
        <note>catalytic</note>
    </ligand>
</feature>
<feature type="binding site" evidence="1">
    <location>
        <position position="289"/>
    </location>
    <ligand>
        <name>Zn(2+)</name>
        <dbReference type="ChEBI" id="CHEBI:29105"/>
        <note>catalytic</note>
    </ligand>
</feature>
<feature type="binding site" evidence="1">
    <location>
        <position position="290"/>
    </location>
    <ligand>
        <name>substrate</name>
    </ligand>
</feature>
<feature type="site" description="Important for catalytic activity" evidence="1">
    <location>
        <position position="232"/>
    </location>
</feature>
<proteinExistence type="inferred from homology"/>
<gene>
    <name evidence="1" type="primary">AAH1</name>
    <name type="ORF">FGRRES_01567</name>
    <name type="ORF">FGSG_01567</name>
</gene>